<protein>
    <recommendedName>
        <fullName evidence="1">Large ribosomal subunit protein uL18</fullName>
    </recommendedName>
    <alternativeName>
        <fullName evidence="2">50S ribosomal protein L18</fullName>
    </alternativeName>
</protein>
<feature type="chain" id="PRO_0000251299" description="Large ribosomal subunit protein uL18">
    <location>
        <begin position="1"/>
        <end position="123"/>
    </location>
</feature>
<keyword id="KW-0687">Ribonucleoprotein</keyword>
<keyword id="KW-0689">Ribosomal protein</keyword>
<keyword id="KW-0694">RNA-binding</keyword>
<keyword id="KW-0699">rRNA-binding</keyword>
<evidence type="ECO:0000255" key="1">
    <source>
        <dbReference type="HAMAP-Rule" id="MF_01337"/>
    </source>
</evidence>
<evidence type="ECO:0000305" key="2"/>
<comment type="function">
    <text evidence="1">This is one of the proteins that bind and probably mediate the attachment of the 5S RNA into the large ribosomal subunit, where it forms part of the central protuberance.</text>
</comment>
<comment type="subunit">
    <text evidence="1">Part of the 50S ribosomal subunit; part of the 5S rRNA/L5/L18/L25 subcomplex. Contacts the 5S and 23S rRNAs.</text>
</comment>
<comment type="similarity">
    <text evidence="1">Belongs to the universal ribosomal protein uL18 family.</text>
</comment>
<proteinExistence type="inferred from homology"/>
<dbReference type="EMBL" id="AP006861">
    <property type="protein sequence ID" value="BAE81670.1"/>
    <property type="molecule type" value="Genomic_DNA"/>
</dbReference>
<dbReference type="RefSeq" id="WP_011458444.1">
    <property type="nucleotide sequence ID" value="NC_007899.1"/>
</dbReference>
<dbReference type="SMR" id="Q252W8"/>
<dbReference type="STRING" id="264202.CF0898"/>
<dbReference type="KEGG" id="cfe:CF0898"/>
<dbReference type="eggNOG" id="COG0256">
    <property type="taxonomic scope" value="Bacteria"/>
</dbReference>
<dbReference type="HOGENOM" id="CLU_098841_0_1_0"/>
<dbReference type="OrthoDB" id="9810939at2"/>
<dbReference type="Proteomes" id="UP000001260">
    <property type="component" value="Chromosome"/>
</dbReference>
<dbReference type="GO" id="GO:0022625">
    <property type="term" value="C:cytosolic large ribosomal subunit"/>
    <property type="evidence" value="ECO:0007669"/>
    <property type="project" value="TreeGrafter"/>
</dbReference>
<dbReference type="GO" id="GO:0008097">
    <property type="term" value="F:5S rRNA binding"/>
    <property type="evidence" value="ECO:0007669"/>
    <property type="project" value="TreeGrafter"/>
</dbReference>
<dbReference type="GO" id="GO:0003735">
    <property type="term" value="F:structural constituent of ribosome"/>
    <property type="evidence" value="ECO:0007669"/>
    <property type="project" value="InterPro"/>
</dbReference>
<dbReference type="GO" id="GO:0006412">
    <property type="term" value="P:translation"/>
    <property type="evidence" value="ECO:0007669"/>
    <property type="project" value="UniProtKB-UniRule"/>
</dbReference>
<dbReference type="CDD" id="cd00432">
    <property type="entry name" value="Ribosomal_L18_L5e"/>
    <property type="match status" value="1"/>
</dbReference>
<dbReference type="FunFam" id="3.30.420.100:FF:000001">
    <property type="entry name" value="50S ribosomal protein L18"/>
    <property type="match status" value="1"/>
</dbReference>
<dbReference type="Gene3D" id="3.30.420.100">
    <property type="match status" value="1"/>
</dbReference>
<dbReference type="HAMAP" id="MF_01337_B">
    <property type="entry name" value="Ribosomal_uL18_B"/>
    <property type="match status" value="1"/>
</dbReference>
<dbReference type="InterPro" id="IPR004389">
    <property type="entry name" value="Ribosomal_uL18_bac-type"/>
</dbReference>
<dbReference type="InterPro" id="IPR005484">
    <property type="entry name" value="Ribosomal_uL18_bac/euk"/>
</dbReference>
<dbReference type="NCBIfam" id="TIGR00060">
    <property type="entry name" value="L18_bact"/>
    <property type="match status" value="1"/>
</dbReference>
<dbReference type="PANTHER" id="PTHR12899">
    <property type="entry name" value="39S RIBOSOMAL PROTEIN L18, MITOCHONDRIAL"/>
    <property type="match status" value="1"/>
</dbReference>
<dbReference type="PANTHER" id="PTHR12899:SF3">
    <property type="entry name" value="LARGE RIBOSOMAL SUBUNIT PROTEIN UL18M"/>
    <property type="match status" value="1"/>
</dbReference>
<dbReference type="Pfam" id="PF00861">
    <property type="entry name" value="Ribosomal_L18p"/>
    <property type="match status" value="1"/>
</dbReference>
<dbReference type="SUPFAM" id="SSF53137">
    <property type="entry name" value="Translational machinery components"/>
    <property type="match status" value="1"/>
</dbReference>
<accession>Q252W8</accession>
<gene>
    <name evidence="1" type="primary">rplR</name>
    <name type="ordered locus">CF0898</name>
</gene>
<organism>
    <name type="scientific">Chlamydia felis (strain Fe/C-56)</name>
    <name type="common">Chlamydophila felis</name>
    <dbReference type="NCBI Taxonomy" id="264202"/>
    <lineage>
        <taxon>Bacteria</taxon>
        <taxon>Pseudomonadati</taxon>
        <taxon>Chlamydiota</taxon>
        <taxon>Chlamydiia</taxon>
        <taxon>Chlamydiales</taxon>
        <taxon>Chlamydiaceae</taxon>
        <taxon>Chlamydia/Chlamydophila group</taxon>
        <taxon>Chlamydia</taxon>
    </lineage>
</organism>
<reference key="1">
    <citation type="journal article" date="2006" name="DNA Res.">
        <title>Genome sequence of the cat pathogen, Chlamydophila felis.</title>
        <authorList>
            <person name="Azuma Y."/>
            <person name="Hirakawa H."/>
            <person name="Yamashita A."/>
            <person name="Cai Y."/>
            <person name="Rahman M.A."/>
            <person name="Suzuki H."/>
            <person name="Mitaku S."/>
            <person name="Toh H."/>
            <person name="Goto S."/>
            <person name="Murakami T."/>
            <person name="Sugi K."/>
            <person name="Hayashi H."/>
            <person name="Fukushi H."/>
            <person name="Hattori M."/>
            <person name="Kuhara S."/>
            <person name="Shirai M."/>
        </authorList>
    </citation>
    <scope>NUCLEOTIDE SEQUENCE [LARGE SCALE GENOMIC DNA]</scope>
    <source>
        <strain>Fe/C-56</strain>
    </source>
</reference>
<name>RL18_CHLFF</name>
<sequence>MENSLFKKSEKKIRRALRVRKVLRGSSLKPRLSVVKTNKHIYVQLIDDSIGKTLASVSTMAKSSKASGLTKKNQDVAKALGSKIAELGKNLQVDRVVFDRGPFKYHGVIAMVADGAREGGLQF</sequence>